<organism>
    <name type="scientific">Pongo abelii</name>
    <name type="common">Sumatran orangutan</name>
    <name type="synonym">Pongo pygmaeus abelii</name>
    <dbReference type="NCBI Taxonomy" id="9601"/>
    <lineage>
        <taxon>Eukaryota</taxon>
        <taxon>Metazoa</taxon>
        <taxon>Chordata</taxon>
        <taxon>Craniata</taxon>
        <taxon>Vertebrata</taxon>
        <taxon>Euteleostomi</taxon>
        <taxon>Mammalia</taxon>
        <taxon>Eutheria</taxon>
        <taxon>Euarchontoglires</taxon>
        <taxon>Primates</taxon>
        <taxon>Haplorrhini</taxon>
        <taxon>Catarrhini</taxon>
        <taxon>Hominidae</taxon>
        <taxon>Pongo</taxon>
    </lineage>
</organism>
<gene>
    <name type="primary">PCMTD2</name>
</gene>
<dbReference type="EMBL" id="CR860111">
    <property type="protein sequence ID" value="CAH92256.1"/>
    <property type="molecule type" value="mRNA"/>
</dbReference>
<dbReference type="RefSeq" id="NP_001126320.1">
    <property type="nucleotide sequence ID" value="NM_001132848.1"/>
</dbReference>
<dbReference type="RefSeq" id="XP_054397442.1">
    <property type="nucleotide sequence ID" value="XM_054541467.2"/>
</dbReference>
<dbReference type="RefSeq" id="XP_054397444.1">
    <property type="nucleotide sequence ID" value="XM_054541469.2"/>
</dbReference>
<dbReference type="RefSeq" id="XP_054397445.1">
    <property type="nucleotide sequence ID" value="XM_054541470.2"/>
</dbReference>
<dbReference type="RefSeq" id="XP_054397446.1">
    <property type="nucleotide sequence ID" value="XM_054541471.2"/>
</dbReference>
<dbReference type="SMR" id="Q5R7K4"/>
<dbReference type="FunCoup" id="Q5R7K4">
    <property type="interactions" value="954"/>
</dbReference>
<dbReference type="STRING" id="9601.ENSPPYP00000012583"/>
<dbReference type="GeneID" id="100173299"/>
<dbReference type="KEGG" id="pon:100173299"/>
<dbReference type="CTD" id="55251"/>
<dbReference type="eggNOG" id="KOG1661">
    <property type="taxonomic scope" value="Eukaryota"/>
</dbReference>
<dbReference type="HOGENOM" id="CLU_029295_0_0_1"/>
<dbReference type="InParanoid" id="Q5R7K4"/>
<dbReference type="OrthoDB" id="10257972at2759"/>
<dbReference type="TreeFam" id="TF329329"/>
<dbReference type="Proteomes" id="UP000001595">
    <property type="component" value="Unplaced"/>
</dbReference>
<dbReference type="GO" id="GO:0005737">
    <property type="term" value="C:cytoplasm"/>
    <property type="evidence" value="ECO:0007669"/>
    <property type="project" value="UniProtKB-SubCell"/>
</dbReference>
<dbReference type="GO" id="GO:0004719">
    <property type="term" value="F:protein-L-isoaspartate (D-aspartate) O-methyltransferase activity"/>
    <property type="evidence" value="ECO:0007669"/>
    <property type="project" value="InterPro"/>
</dbReference>
<dbReference type="GO" id="GO:0036211">
    <property type="term" value="P:protein modification process"/>
    <property type="evidence" value="ECO:0007669"/>
    <property type="project" value="InterPro"/>
</dbReference>
<dbReference type="CDD" id="cd02440">
    <property type="entry name" value="AdoMet_MTases"/>
    <property type="match status" value="1"/>
</dbReference>
<dbReference type="FunFam" id="3.40.50.150:FF:000015">
    <property type="entry name" value="Protein-L-isoaspartate (D-aspartate) O-methyltransferase domain-containing 1"/>
    <property type="match status" value="1"/>
</dbReference>
<dbReference type="Gene3D" id="3.40.50.150">
    <property type="entry name" value="Vaccinia Virus protein VP39"/>
    <property type="match status" value="1"/>
</dbReference>
<dbReference type="InterPro" id="IPR000682">
    <property type="entry name" value="PCMT"/>
</dbReference>
<dbReference type="InterPro" id="IPR029063">
    <property type="entry name" value="SAM-dependent_MTases_sf"/>
</dbReference>
<dbReference type="PANTHER" id="PTHR11579">
    <property type="entry name" value="PROTEIN-L-ISOASPARTATE O-METHYLTRANSFERASE"/>
    <property type="match status" value="1"/>
</dbReference>
<dbReference type="PANTHER" id="PTHR11579:SF2">
    <property type="entry name" value="PROTEIN-L-ISOASPARTATE O-METHYLTRANSFERASE DOMAIN-CONTAINING PROTEIN 2"/>
    <property type="match status" value="1"/>
</dbReference>
<dbReference type="Pfam" id="PF01135">
    <property type="entry name" value="PCMT"/>
    <property type="match status" value="1"/>
</dbReference>
<dbReference type="SUPFAM" id="SSF53335">
    <property type="entry name" value="S-adenosyl-L-methionine-dependent methyltransferases"/>
    <property type="match status" value="1"/>
</dbReference>
<feature type="chain" id="PRO_0000293542" description="Protein-L-isoaspartate O-methyltransferase domain-containing protein 2">
    <location>
        <begin position="1"/>
        <end position="361"/>
    </location>
</feature>
<feature type="region of interest" description="AdoMet binding motif" evidence="3">
    <location>
        <begin position="85"/>
        <end position="94"/>
    </location>
</feature>
<feature type="region of interest" description="AdoMet binding motif" evidence="3">
    <location>
        <begin position="160"/>
        <end position="164"/>
    </location>
</feature>
<feature type="region of interest" description="AdoMet binding motif" evidence="3">
    <location>
        <begin position="181"/>
        <end position="191"/>
    </location>
</feature>
<feature type="region of interest" description="BC-box" evidence="3">
    <location>
        <begin position="240"/>
        <end position="250"/>
    </location>
</feature>
<feature type="region of interest" description="Disordered" evidence="4">
    <location>
        <begin position="303"/>
        <end position="336"/>
    </location>
</feature>
<feature type="region of interest" description="CUL-box" evidence="3">
    <location>
        <begin position="345"/>
        <end position="348"/>
    </location>
</feature>
<feature type="compositionally biased region" description="Acidic residues" evidence="4">
    <location>
        <begin position="309"/>
        <end position="320"/>
    </location>
</feature>
<feature type="compositionally biased region" description="Basic and acidic residues" evidence="4">
    <location>
        <begin position="321"/>
        <end position="331"/>
    </location>
</feature>
<feature type="active site" evidence="2">
    <location>
        <position position="64"/>
    </location>
</feature>
<proteinExistence type="evidence at transcript level"/>
<protein>
    <recommendedName>
        <fullName>Protein-L-isoaspartate O-methyltransferase domain-containing protein 2</fullName>
    </recommendedName>
</protein>
<evidence type="ECO:0000250" key="1">
    <source>
        <dbReference type="UniProtKB" id="P22061"/>
    </source>
</evidence>
<evidence type="ECO:0000250" key="2">
    <source>
        <dbReference type="UniProtKB" id="Q27869"/>
    </source>
</evidence>
<evidence type="ECO:0000250" key="3">
    <source>
        <dbReference type="UniProtKB" id="Q96MG8"/>
    </source>
</evidence>
<evidence type="ECO:0000256" key="4">
    <source>
        <dbReference type="SAM" id="MobiDB-lite"/>
    </source>
</evidence>
<evidence type="ECO:0000305" key="5"/>
<sequence>MGGAVSAGEDNDELIDNLKEAQYIRTELVEQAFRAIDRADYYLEEFKENAYKDLAWKHGNIHLSAPCIYSEVMEALDLQPGLSFLNLGSGTGYLSSMVGLILGPFGVNHGVELHSDVIEYAKQKLDFFIRTSDSFDKFDFCEPSFVTGNCLEISPDCSQYDRVYCGAGVQKEHEEYMKNLLKVGGILVMPLEEKLTKITRTGPSAWETKKILAVSFAPLIQPCHSESGKSRLVQLPPVAVRSLQDLARIAIRGTIKKIIHQETVSKNGNGLKNTPRFKRRRVRRRRMETIVFLDKEVFASRISNPSDDNSCEDLEEERREEEEKTPPETKPDPPVNFLRQKVLSLPLPDPLKYYLLYYREK</sequence>
<accession>Q5R7K4</accession>
<name>PCMD2_PONAB</name>
<reference key="1">
    <citation type="submission" date="2004-11" db="EMBL/GenBank/DDBJ databases">
        <authorList>
            <consortium name="The German cDNA consortium"/>
        </authorList>
    </citation>
    <scope>NUCLEOTIDE SEQUENCE [LARGE SCALE MRNA]</scope>
    <source>
        <tissue>Brain cortex</tissue>
    </source>
</reference>
<comment type="function">
    <text evidence="3">May act as a substrate recognition component of an ECS (Elongin BC-CUL5-SOCS-box protein) E3 ubiquitin ligase complex which mediates the ubiquitination and subsequent proteasomal degradation of target proteins. May bind to the methyltransferase cofactor S-adenosylmethionine (AdoMet) via the N-terminal AdoMet binding motif, but probably does not display methyltransferase activity.</text>
</comment>
<comment type="subcellular location">
    <subcellularLocation>
        <location evidence="1">Cytoplasm</location>
    </subcellularLocation>
</comment>
<comment type="domain">
    <text evidence="3">At its N-terminus, contains L-isoaspartate and S-adenosylmethionine (AdoMet) binding motifs. Also contains an extended SOCS box motif, where the Cul-box is separated from the BC-box by ~90 residues, within its C-terminus.</text>
</comment>
<comment type="similarity">
    <text evidence="5">Belongs to the methyltransferase superfamily. L-isoaspartyl/D-aspartyl protein methyltransferase family.</text>
</comment>
<comment type="caution">
    <text evidence="3">Although the active site residue Ser is conserved, appears to lack catalytic activity in vitro.</text>
</comment>
<keyword id="KW-0963">Cytoplasm</keyword>
<keyword id="KW-1185">Reference proteome</keyword>